<sequence length="185" mass="20961">MISGSDLRKGTTFELDGQVYTVIDFLHVKPGKGAAFVRTKLRNVIMGGVTDRTFNPTDKLQEAIIERKEMQYLYSDGELYYFMDQETFEQIPLNHEKVEDAIKFLKENMNAVIKFYKGEAFSVEAPNFVELLITECEPSVKGNTATTAMKTAVVETGATVMVPMFVEEGNTIRIDTRTGEYMERV</sequence>
<name>EFP_CLOPS</name>
<reference key="1">
    <citation type="journal article" date="2006" name="Genome Res.">
        <title>Skewed genomic variability in strains of the toxigenic bacterial pathogen, Clostridium perfringens.</title>
        <authorList>
            <person name="Myers G.S.A."/>
            <person name="Rasko D.A."/>
            <person name="Cheung J.K."/>
            <person name="Ravel J."/>
            <person name="Seshadri R."/>
            <person name="DeBoy R.T."/>
            <person name="Ren Q."/>
            <person name="Varga J."/>
            <person name="Awad M.M."/>
            <person name="Brinkac L.M."/>
            <person name="Daugherty S.C."/>
            <person name="Haft D.H."/>
            <person name="Dodson R.J."/>
            <person name="Madupu R."/>
            <person name="Nelson W.C."/>
            <person name="Rosovitz M.J."/>
            <person name="Sullivan S.A."/>
            <person name="Khouri H."/>
            <person name="Dimitrov G.I."/>
            <person name="Watkins K.L."/>
            <person name="Mulligan S."/>
            <person name="Benton J."/>
            <person name="Radune D."/>
            <person name="Fisher D.J."/>
            <person name="Atkins H.S."/>
            <person name="Hiscox T."/>
            <person name="Jost B.H."/>
            <person name="Billington S.J."/>
            <person name="Songer J.G."/>
            <person name="McClane B.A."/>
            <person name="Titball R.W."/>
            <person name="Rood J.I."/>
            <person name="Melville S.B."/>
            <person name="Paulsen I.T."/>
        </authorList>
    </citation>
    <scope>NUCLEOTIDE SEQUENCE [LARGE SCALE GENOMIC DNA]</scope>
    <source>
        <strain>SM101 / Type A</strain>
    </source>
</reference>
<evidence type="ECO:0000255" key="1">
    <source>
        <dbReference type="HAMAP-Rule" id="MF_00141"/>
    </source>
</evidence>
<keyword id="KW-0963">Cytoplasm</keyword>
<keyword id="KW-0251">Elongation factor</keyword>
<keyword id="KW-0648">Protein biosynthesis</keyword>
<protein>
    <recommendedName>
        <fullName evidence="1">Elongation factor P</fullName>
        <shortName evidence="1">EF-P</shortName>
    </recommendedName>
</protein>
<feature type="chain" id="PRO_1000010723" description="Elongation factor P">
    <location>
        <begin position="1"/>
        <end position="185"/>
    </location>
</feature>
<comment type="function">
    <text evidence="1">Involved in peptide bond synthesis. Stimulates efficient translation and peptide-bond synthesis on native or reconstituted 70S ribosomes in vitro. Probably functions indirectly by altering the affinity of the ribosome for aminoacyl-tRNA, thus increasing their reactivity as acceptors for peptidyl transferase.</text>
</comment>
<comment type="pathway">
    <text evidence="1">Protein biosynthesis; polypeptide chain elongation.</text>
</comment>
<comment type="subcellular location">
    <subcellularLocation>
        <location evidence="1">Cytoplasm</location>
    </subcellularLocation>
</comment>
<comment type="similarity">
    <text evidence="1">Belongs to the elongation factor P family.</text>
</comment>
<organism>
    <name type="scientific">Clostridium perfringens (strain SM101 / Type A)</name>
    <dbReference type="NCBI Taxonomy" id="289380"/>
    <lineage>
        <taxon>Bacteria</taxon>
        <taxon>Bacillati</taxon>
        <taxon>Bacillota</taxon>
        <taxon>Clostridia</taxon>
        <taxon>Eubacteriales</taxon>
        <taxon>Clostridiaceae</taxon>
        <taxon>Clostridium</taxon>
    </lineage>
</organism>
<accession>Q0SRY9</accession>
<dbReference type="EMBL" id="CP000312">
    <property type="protein sequence ID" value="ABG86798.1"/>
    <property type="molecule type" value="Genomic_DNA"/>
</dbReference>
<dbReference type="RefSeq" id="WP_003451649.1">
    <property type="nucleotide sequence ID" value="NZ_CAXVKH010000001.1"/>
</dbReference>
<dbReference type="SMR" id="Q0SRY9"/>
<dbReference type="GeneID" id="93001630"/>
<dbReference type="KEGG" id="cpr:CPR_1803"/>
<dbReference type="UniPathway" id="UPA00345"/>
<dbReference type="Proteomes" id="UP000001824">
    <property type="component" value="Chromosome"/>
</dbReference>
<dbReference type="GO" id="GO:0005737">
    <property type="term" value="C:cytoplasm"/>
    <property type="evidence" value="ECO:0007669"/>
    <property type="project" value="UniProtKB-SubCell"/>
</dbReference>
<dbReference type="GO" id="GO:0003746">
    <property type="term" value="F:translation elongation factor activity"/>
    <property type="evidence" value="ECO:0007669"/>
    <property type="project" value="UniProtKB-UniRule"/>
</dbReference>
<dbReference type="GO" id="GO:0043043">
    <property type="term" value="P:peptide biosynthetic process"/>
    <property type="evidence" value="ECO:0007669"/>
    <property type="project" value="InterPro"/>
</dbReference>
<dbReference type="CDD" id="cd04470">
    <property type="entry name" value="S1_EF-P_repeat_1"/>
    <property type="match status" value="1"/>
</dbReference>
<dbReference type="CDD" id="cd05794">
    <property type="entry name" value="S1_EF-P_repeat_2"/>
    <property type="match status" value="1"/>
</dbReference>
<dbReference type="FunFam" id="2.30.30.30:FF:000003">
    <property type="entry name" value="Elongation factor P"/>
    <property type="match status" value="1"/>
</dbReference>
<dbReference type="FunFam" id="2.40.50.140:FF:000004">
    <property type="entry name" value="Elongation factor P"/>
    <property type="match status" value="1"/>
</dbReference>
<dbReference type="FunFam" id="2.40.50.140:FF:000009">
    <property type="entry name" value="Elongation factor P"/>
    <property type="match status" value="1"/>
</dbReference>
<dbReference type="Gene3D" id="2.30.30.30">
    <property type="match status" value="1"/>
</dbReference>
<dbReference type="Gene3D" id="2.40.50.140">
    <property type="entry name" value="Nucleic acid-binding proteins"/>
    <property type="match status" value="2"/>
</dbReference>
<dbReference type="HAMAP" id="MF_00141">
    <property type="entry name" value="EF_P"/>
    <property type="match status" value="1"/>
</dbReference>
<dbReference type="InterPro" id="IPR015365">
    <property type="entry name" value="Elong-fact-P_C"/>
</dbReference>
<dbReference type="InterPro" id="IPR012340">
    <property type="entry name" value="NA-bd_OB-fold"/>
</dbReference>
<dbReference type="InterPro" id="IPR014722">
    <property type="entry name" value="Rib_uL2_dom2"/>
</dbReference>
<dbReference type="InterPro" id="IPR020599">
    <property type="entry name" value="Transl_elong_fac_P/YeiP"/>
</dbReference>
<dbReference type="InterPro" id="IPR013185">
    <property type="entry name" value="Transl_elong_KOW-like"/>
</dbReference>
<dbReference type="InterPro" id="IPR001059">
    <property type="entry name" value="Transl_elong_P/YeiP_cen"/>
</dbReference>
<dbReference type="InterPro" id="IPR013852">
    <property type="entry name" value="Transl_elong_P/YeiP_CS"/>
</dbReference>
<dbReference type="InterPro" id="IPR011768">
    <property type="entry name" value="Transl_elongation_fac_P"/>
</dbReference>
<dbReference type="InterPro" id="IPR008991">
    <property type="entry name" value="Translation_prot_SH3-like_sf"/>
</dbReference>
<dbReference type="NCBIfam" id="TIGR00038">
    <property type="entry name" value="efp"/>
    <property type="match status" value="1"/>
</dbReference>
<dbReference type="NCBIfam" id="NF001810">
    <property type="entry name" value="PRK00529.1"/>
    <property type="match status" value="1"/>
</dbReference>
<dbReference type="PANTHER" id="PTHR30053">
    <property type="entry name" value="ELONGATION FACTOR P"/>
    <property type="match status" value="1"/>
</dbReference>
<dbReference type="PANTHER" id="PTHR30053:SF12">
    <property type="entry name" value="ELONGATION FACTOR P (EF-P) FAMILY PROTEIN"/>
    <property type="match status" value="1"/>
</dbReference>
<dbReference type="Pfam" id="PF01132">
    <property type="entry name" value="EFP"/>
    <property type="match status" value="1"/>
</dbReference>
<dbReference type="Pfam" id="PF08207">
    <property type="entry name" value="EFP_N"/>
    <property type="match status" value="1"/>
</dbReference>
<dbReference type="Pfam" id="PF09285">
    <property type="entry name" value="Elong-fact-P_C"/>
    <property type="match status" value="1"/>
</dbReference>
<dbReference type="PIRSF" id="PIRSF005901">
    <property type="entry name" value="EF-P"/>
    <property type="match status" value="1"/>
</dbReference>
<dbReference type="SMART" id="SM01185">
    <property type="entry name" value="EFP"/>
    <property type="match status" value="1"/>
</dbReference>
<dbReference type="SMART" id="SM00841">
    <property type="entry name" value="Elong-fact-P_C"/>
    <property type="match status" value="1"/>
</dbReference>
<dbReference type="SUPFAM" id="SSF50249">
    <property type="entry name" value="Nucleic acid-binding proteins"/>
    <property type="match status" value="2"/>
</dbReference>
<dbReference type="SUPFAM" id="SSF50104">
    <property type="entry name" value="Translation proteins SH3-like domain"/>
    <property type="match status" value="1"/>
</dbReference>
<dbReference type="PROSITE" id="PS01275">
    <property type="entry name" value="EFP"/>
    <property type="match status" value="1"/>
</dbReference>
<gene>
    <name evidence="1" type="primary">efp</name>
    <name type="ordered locus">CPR_1803</name>
</gene>
<proteinExistence type="inferred from homology"/>